<comment type="function">
    <text evidence="3 4 6 8">Involved in calcium binding and microtubule stabilization (PubMed:12167714, PubMed:15162379, PubMed:15958728). Acts as a negative regulator of TSC22D1-mediated apoptosis, via interaction with and destabilization of TSC22D1 protein (PubMed:18325344).</text>
</comment>
<comment type="subunit">
    <text evidence="1 5 8">Homodimer (By similarity). Interacts with STEAP3 (PubMed:15319436). Interacts with TSC22D1; interaction results in the destabilization of TSC22D1 protein (PubMed:18325344).</text>
</comment>
<comment type="interaction">
    <interactant intactId="EBI-1783169">
        <id>P13693</id>
    </interactant>
    <interactant intactId="EBI-353944">
        <id>P60709</id>
        <label>ACTB</label>
    </interactant>
    <organismsDiffer>false</organismsDiffer>
    <experiments>4</experiments>
</comment>
<comment type="interaction">
    <interactant intactId="EBI-1783169">
        <id>P13693</id>
    </interactant>
    <interactant intactId="EBI-358778">
        <id>P05023</id>
        <label>ATP1A1</label>
    </interactant>
    <organismsDiffer>false</organismsDiffer>
    <experiments>5</experiments>
</comment>
<comment type="interaction">
    <interactant intactId="EBI-1783169">
        <id>P13693</id>
    </interactant>
    <interactant intactId="EBI-358607">
        <id>P29692</id>
        <label>EEF1D</label>
    </interactant>
    <organismsDiffer>false</organismsDiffer>
    <experiments>3</experiments>
</comment>
<comment type="interaction">
    <interactant intactId="EBI-1783169">
        <id>P13693</id>
    </interactant>
    <interactant intactId="EBI-5280572">
        <id>P29692-2</id>
        <label>EEF1D</label>
    </interactant>
    <organismsDiffer>false</organismsDiffer>
    <experiments>3</experiments>
</comment>
<comment type="interaction">
    <interactant intactId="EBI-1783169">
        <id>P13693</id>
    </interactant>
    <interactant intactId="EBI-354932">
        <id>P38646</id>
        <label>HSPA9</label>
    </interactant>
    <organismsDiffer>false</organismsDiffer>
    <experiments>4</experiments>
</comment>
<comment type="interaction">
    <interactant intactId="EBI-1783169">
        <id>P13693</id>
    </interactant>
    <interactant intactId="EBI-352682">
        <id>P04792</id>
        <label>HSPB1</label>
    </interactant>
    <organismsDiffer>false</organismsDiffer>
    <experiments>2</experiments>
</comment>
<comment type="interaction">
    <interactant intactId="EBI-1783169">
        <id>P13693</id>
    </interactant>
    <interactant intactId="EBI-353193">
        <id>Q06830</id>
        <label>PRDX1</label>
    </interactant>
    <organismsDiffer>false</organismsDiffer>
    <experiments>4</experiments>
</comment>
<comment type="interaction">
    <interactant intactId="EBI-1783169">
        <id>P13693</id>
    </interactant>
    <interactant intactId="EBI-1055287">
        <id>Q15382</id>
        <label>RHEB</label>
    </interactant>
    <organismsDiffer>false</organismsDiffer>
    <experiments>2</experiments>
</comment>
<comment type="interaction">
    <interactant intactId="EBI-1783169">
        <id>P13693</id>
    </interactant>
    <interactant intactId="EBI-366083">
        <id>P04637</id>
        <label>TP53</label>
    </interactant>
    <organismsDiffer>false</organismsDiffer>
    <experiments>7</experiments>
</comment>
<comment type="interaction">
    <interactant intactId="EBI-1783169">
        <id>P13693</id>
    </interactant>
    <interactant intactId="EBI-358993">
        <id>Q15645</id>
        <label>TRIP13</label>
    </interactant>
    <organismsDiffer>false</organismsDiffer>
    <experiments>3</experiments>
</comment>
<comment type="interaction">
    <interactant intactId="EBI-1783169">
        <id>P13693</id>
    </interactant>
    <interactant intactId="EBI-712609">
        <id>Q15714</id>
        <label>TSC22D1</label>
    </interactant>
    <organismsDiffer>false</organismsDiffer>
    <experiments>5</experiments>
</comment>
<comment type="interaction">
    <interactant intactId="EBI-1783169">
        <id>P13693</id>
    </interactant>
    <interactant intactId="EBI-1103245">
        <id>Q9BQE3</id>
        <label>TUBA1C</label>
    </interactant>
    <organismsDiffer>false</organismsDiffer>
    <experiments>4</experiments>
</comment>
<comment type="interaction">
    <interactant intactId="EBI-1783169">
        <id>P13693</id>
    </interactant>
    <interactant intactId="EBI-357997">
        <id>P13010</id>
        <label>XRCC5</label>
    </interactant>
    <organismsDiffer>false</organismsDiffer>
    <experiments>4</experiments>
</comment>
<comment type="interaction">
    <interactant intactId="EBI-1783169">
        <id>P13693</id>
    </interactant>
    <interactant intactId="EBI-353208">
        <id>P12956</id>
        <label>XRCC6</label>
    </interactant>
    <organismsDiffer>false</organismsDiffer>
    <experiments>8</experiments>
</comment>
<comment type="interaction">
    <interactant intactId="EBI-1783169">
        <id>P13693</id>
    </interactant>
    <interactant intactId="EBI-354065">
        <id>P67809</id>
        <label>YBX1</label>
    </interactant>
    <organismsDiffer>false</organismsDiffer>
    <experiments>4</experiments>
</comment>
<comment type="subcellular location">
    <subcellularLocation>
        <location evidence="9">Cytoplasm</location>
    </subcellularLocation>
</comment>
<comment type="alternative products">
    <event type="alternative splicing"/>
    <isoform>
        <id>P13693-1</id>
        <name>1</name>
        <sequence type="displayed"/>
    </isoform>
    <isoform>
        <id>P13693-2</id>
        <name>2</name>
        <sequence type="described" ref="VSP_054838"/>
    </isoform>
</comment>
<comment type="tissue specificity">
    <text evidence="9">Found in several healthy and tumoral cells including erythrocytes, hepatocytes, macrophages, platelets, keratinocytes, erythroleukemia cells, gliomas, melanomas, hepatoblastomas, and lymphomas. It cannot be detected in kidney and renal cell carcinoma (RCC). Expressed in placenta and prostate.</text>
</comment>
<comment type="induction">
    <text evidence="7">Down-regulated in response to enterovirus 71 (EV71) infection.</text>
</comment>
<comment type="similarity">
    <text evidence="2">Belongs to the TCTP family.</text>
</comment>
<reference key="1">
    <citation type="journal article" date="1989" name="Nucleic Acids Res.">
        <title>cDNA sequence coding for a translationally controlled human tumor protein.</title>
        <authorList>
            <person name="Gross B."/>
            <person name="Gaestel M."/>
            <person name="Boehm H."/>
            <person name="Bielka H."/>
        </authorList>
    </citation>
    <scope>NUCLEOTIDE SEQUENCE [MRNA] (ISOFORM 1)</scope>
</reference>
<reference key="2">
    <citation type="thesis" date="2000" institute="Humboldt-University Berlin" country="Germany">
        <authorList>
            <person name="Thiele H."/>
        </authorList>
    </citation>
    <scope>NUCLEOTIDE SEQUENCE [GENOMIC DNA] (ISOFORM 1)</scope>
</reference>
<reference key="3">
    <citation type="submission" date="2003-07" db="EMBL/GenBank/DDBJ databases">
        <title>Cloning and characterization of TCTP from human eosinophils.</title>
        <authorList>
            <person name="Gnanasekar M."/>
            <person name="Ramaswamy K."/>
        </authorList>
    </citation>
    <scope>NUCLEOTIDE SEQUENCE [MRNA] (ISOFORM 1)</scope>
</reference>
<reference key="4">
    <citation type="submission" date="2002-06" db="EMBL/GenBank/DDBJ databases">
        <authorList>
            <person name="Gao T.H."/>
            <person name="Duan F.L."/>
            <person name="Zhu W.L."/>
        </authorList>
    </citation>
    <scope>NUCLEOTIDE SEQUENCE [MRNA] (ISOFORM 1)</scope>
</reference>
<reference key="5">
    <citation type="submission" date="2004-06" db="EMBL/GenBank/DDBJ databases">
        <title>Cloning of human full open reading frames in Gateway(TM) system entry vector (pDONR201).</title>
        <authorList>
            <person name="Ebert L."/>
            <person name="Schick M."/>
            <person name="Neubert P."/>
            <person name="Schatten R."/>
            <person name="Henze S."/>
            <person name="Korn B."/>
        </authorList>
    </citation>
    <scope>NUCLEOTIDE SEQUENCE [LARGE SCALE MRNA] (ISOFORM 1)</scope>
</reference>
<reference key="6">
    <citation type="journal article" date="2004" name="Nat. Genet.">
        <title>Complete sequencing and characterization of 21,243 full-length human cDNAs.</title>
        <authorList>
            <person name="Ota T."/>
            <person name="Suzuki Y."/>
            <person name="Nishikawa T."/>
            <person name="Otsuki T."/>
            <person name="Sugiyama T."/>
            <person name="Irie R."/>
            <person name="Wakamatsu A."/>
            <person name="Hayashi K."/>
            <person name="Sato H."/>
            <person name="Nagai K."/>
            <person name="Kimura K."/>
            <person name="Makita H."/>
            <person name="Sekine M."/>
            <person name="Obayashi M."/>
            <person name="Nishi T."/>
            <person name="Shibahara T."/>
            <person name="Tanaka T."/>
            <person name="Ishii S."/>
            <person name="Yamamoto J."/>
            <person name="Saito K."/>
            <person name="Kawai Y."/>
            <person name="Isono Y."/>
            <person name="Nakamura Y."/>
            <person name="Nagahari K."/>
            <person name="Murakami K."/>
            <person name="Yasuda T."/>
            <person name="Iwayanagi T."/>
            <person name="Wagatsuma M."/>
            <person name="Shiratori A."/>
            <person name="Sudo H."/>
            <person name="Hosoiri T."/>
            <person name="Kaku Y."/>
            <person name="Kodaira H."/>
            <person name="Kondo H."/>
            <person name="Sugawara M."/>
            <person name="Takahashi M."/>
            <person name="Kanda K."/>
            <person name="Yokoi T."/>
            <person name="Furuya T."/>
            <person name="Kikkawa E."/>
            <person name="Omura Y."/>
            <person name="Abe K."/>
            <person name="Kamihara K."/>
            <person name="Katsuta N."/>
            <person name="Sato K."/>
            <person name="Tanikawa M."/>
            <person name="Yamazaki M."/>
            <person name="Ninomiya K."/>
            <person name="Ishibashi T."/>
            <person name="Yamashita H."/>
            <person name="Murakawa K."/>
            <person name="Fujimori K."/>
            <person name="Tanai H."/>
            <person name="Kimata M."/>
            <person name="Watanabe M."/>
            <person name="Hiraoka S."/>
            <person name="Chiba Y."/>
            <person name="Ishida S."/>
            <person name="Ono Y."/>
            <person name="Takiguchi S."/>
            <person name="Watanabe S."/>
            <person name="Yosida M."/>
            <person name="Hotuta T."/>
            <person name="Kusano J."/>
            <person name="Kanehori K."/>
            <person name="Takahashi-Fujii A."/>
            <person name="Hara H."/>
            <person name="Tanase T.-O."/>
            <person name="Nomura Y."/>
            <person name="Togiya S."/>
            <person name="Komai F."/>
            <person name="Hara R."/>
            <person name="Takeuchi K."/>
            <person name="Arita M."/>
            <person name="Imose N."/>
            <person name="Musashino K."/>
            <person name="Yuuki H."/>
            <person name="Oshima A."/>
            <person name="Sasaki N."/>
            <person name="Aotsuka S."/>
            <person name="Yoshikawa Y."/>
            <person name="Matsunawa H."/>
            <person name="Ichihara T."/>
            <person name="Shiohata N."/>
            <person name="Sano S."/>
            <person name="Moriya S."/>
            <person name="Momiyama H."/>
            <person name="Satoh N."/>
            <person name="Takami S."/>
            <person name="Terashima Y."/>
            <person name="Suzuki O."/>
            <person name="Nakagawa S."/>
            <person name="Senoh A."/>
            <person name="Mizoguchi H."/>
            <person name="Goto Y."/>
            <person name="Shimizu F."/>
            <person name="Wakebe H."/>
            <person name="Hishigaki H."/>
            <person name="Watanabe T."/>
            <person name="Sugiyama A."/>
            <person name="Takemoto M."/>
            <person name="Kawakami B."/>
            <person name="Yamazaki M."/>
            <person name="Watanabe K."/>
            <person name="Kumagai A."/>
            <person name="Itakura S."/>
            <person name="Fukuzumi Y."/>
            <person name="Fujimori Y."/>
            <person name="Komiyama M."/>
            <person name="Tashiro H."/>
            <person name="Tanigami A."/>
            <person name="Fujiwara T."/>
            <person name="Ono T."/>
            <person name="Yamada K."/>
            <person name="Fujii Y."/>
            <person name="Ozaki K."/>
            <person name="Hirao M."/>
            <person name="Ohmori Y."/>
            <person name="Kawabata A."/>
            <person name="Hikiji T."/>
            <person name="Kobatake N."/>
            <person name="Inagaki H."/>
            <person name="Ikema Y."/>
            <person name="Okamoto S."/>
            <person name="Okitani R."/>
            <person name="Kawakami T."/>
            <person name="Noguchi S."/>
            <person name="Itoh T."/>
            <person name="Shigeta K."/>
            <person name="Senba T."/>
            <person name="Matsumura K."/>
            <person name="Nakajima Y."/>
            <person name="Mizuno T."/>
            <person name="Morinaga M."/>
            <person name="Sasaki M."/>
            <person name="Togashi T."/>
            <person name="Oyama M."/>
            <person name="Hata H."/>
            <person name="Watanabe M."/>
            <person name="Komatsu T."/>
            <person name="Mizushima-Sugano J."/>
            <person name="Satoh T."/>
            <person name="Shirai Y."/>
            <person name="Takahashi Y."/>
            <person name="Nakagawa K."/>
            <person name="Okumura K."/>
            <person name="Nagase T."/>
            <person name="Nomura N."/>
            <person name="Kikuchi H."/>
            <person name="Masuho Y."/>
            <person name="Yamashita R."/>
            <person name="Nakai K."/>
            <person name="Yada T."/>
            <person name="Nakamura Y."/>
            <person name="Ohara O."/>
            <person name="Isogai T."/>
            <person name="Sugano S."/>
        </authorList>
    </citation>
    <scope>NUCLEOTIDE SEQUENCE [LARGE SCALE MRNA] (ISOFORM 1)</scope>
    <source>
        <tissue>Trachea</tissue>
    </source>
</reference>
<reference key="7">
    <citation type="journal article" date="2004" name="Nature">
        <title>The DNA sequence and analysis of human chromosome 13.</title>
        <authorList>
            <person name="Dunham A."/>
            <person name="Matthews L.H."/>
            <person name="Burton J."/>
            <person name="Ashurst J.L."/>
            <person name="Howe K.L."/>
            <person name="Ashcroft K.J."/>
            <person name="Beare D.M."/>
            <person name="Burford D.C."/>
            <person name="Hunt S.E."/>
            <person name="Griffiths-Jones S."/>
            <person name="Jones M.C."/>
            <person name="Keenan S.J."/>
            <person name="Oliver K."/>
            <person name="Scott C.E."/>
            <person name="Ainscough R."/>
            <person name="Almeida J.P."/>
            <person name="Ambrose K.D."/>
            <person name="Andrews D.T."/>
            <person name="Ashwell R.I.S."/>
            <person name="Babbage A.K."/>
            <person name="Bagguley C.L."/>
            <person name="Bailey J."/>
            <person name="Bannerjee R."/>
            <person name="Barlow K.F."/>
            <person name="Bates K."/>
            <person name="Beasley H."/>
            <person name="Bird C.P."/>
            <person name="Bray-Allen S."/>
            <person name="Brown A.J."/>
            <person name="Brown J.Y."/>
            <person name="Burrill W."/>
            <person name="Carder C."/>
            <person name="Carter N.P."/>
            <person name="Chapman J.C."/>
            <person name="Clamp M.E."/>
            <person name="Clark S.Y."/>
            <person name="Clarke G."/>
            <person name="Clee C.M."/>
            <person name="Clegg S.C."/>
            <person name="Cobley V."/>
            <person name="Collins J.E."/>
            <person name="Corby N."/>
            <person name="Coville G.J."/>
            <person name="Deloukas P."/>
            <person name="Dhami P."/>
            <person name="Dunham I."/>
            <person name="Dunn M."/>
            <person name="Earthrowl M.E."/>
            <person name="Ellington A.G."/>
            <person name="Faulkner L."/>
            <person name="Frankish A.G."/>
            <person name="Frankland J."/>
            <person name="French L."/>
            <person name="Garner P."/>
            <person name="Garnett J."/>
            <person name="Gilbert J.G.R."/>
            <person name="Gilson C.J."/>
            <person name="Ghori J."/>
            <person name="Grafham D.V."/>
            <person name="Gribble S.M."/>
            <person name="Griffiths C."/>
            <person name="Hall R.E."/>
            <person name="Hammond S."/>
            <person name="Harley J.L."/>
            <person name="Hart E.A."/>
            <person name="Heath P.D."/>
            <person name="Howden P.J."/>
            <person name="Huckle E.J."/>
            <person name="Hunt P.J."/>
            <person name="Hunt A.R."/>
            <person name="Johnson C."/>
            <person name="Johnson D."/>
            <person name="Kay M."/>
            <person name="Kimberley A.M."/>
            <person name="King A."/>
            <person name="Laird G.K."/>
            <person name="Langford C.J."/>
            <person name="Lawlor S."/>
            <person name="Leongamornlert D.A."/>
            <person name="Lloyd D.M."/>
            <person name="Lloyd C."/>
            <person name="Loveland J.E."/>
            <person name="Lovell J."/>
            <person name="Martin S."/>
            <person name="Mashreghi-Mohammadi M."/>
            <person name="McLaren S.J."/>
            <person name="McMurray A."/>
            <person name="Milne S."/>
            <person name="Moore M.J.F."/>
            <person name="Nickerson T."/>
            <person name="Palmer S.A."/>
            <person name="Pearce A.V."/>
            <person name="Peck A.I."/>
            <person name="Pelan S."/>
            <person name="Phillimore B."/>
            <person name="Porter K.M."/>
            <person name="Rice C.M."/>
            <person name="Searle S."/>
            <person name="Sehra H.K."/>
            <person name="Shownkeen R."/>
            <person name="Skuce C.D."/>
            <person name="Smith M."/>
            <person name="Steward C.A."/>
            <person name="Sycamore N."/>
            <person name="Tester J."/>
            <person name="Thomas D.W."/>
            <person name="Tracey A."/>
            <person name="Tromans A."/>
            <person name="Tubby B."/>
            <person name="Wall M."/>
            <person name="Wallis J.M."/>
            <person name="West A.P."/>
            <person name="Whitehead S.L."/>
            <person name="Willey D.L."/>
            <person name="Wilming L."/>
            <person name="Wray P.W."/>
            <person name="Wright M.W."/>
            <person name="Young L."/>
            <person name="Coulson A."/>
            <person name="Durbin R.M."/>
            <person name="Hubbard T."/>
            <person name="Sulston J.E."/>
            <person name="Beck S."/>
            <person name="Bentley D.R."/>
            <person name="Rogers J."/>
            <person name="Ross M.T."/>
        </authorList>
    </citation>
    <scope>NUCLEOTIDE SEQUENCE [LARGE SCALE GENOMIC DNA]</scope>
</reference>
<reference key="8">
    <citation type="submission" date="2005-07" db="EMBL/GenBank/DDBJ databases">
        <authorList>
            <person name="Mural R.J."/>
            <person name="Istrail S."/>
            <person name="Sutton G.G."/>
            <person name="Florea L."/>
            <person name="Halpern A.L."/>
            <person name="Mobarry C.M."/>
            <person name="Lippert R."/>
            <person name="Walenz B."/>
            <person name="Shatkay H."/>
            <person name="Dew I."/>
            <person name="Miller J.R."/>
            <person name="Flanigan M.J."/>
            <person name="Edwards N.J."/>
            <person name="Bolanos R."/>
            <person name="Fasulo D."/>
            <person name="Halldorsson B.V."/>
            <person name="Hannenhalli S."/>
            <person name="Turner R."/>
            <person name="Yooseph S."/>
            <person name="Lu F."/>
            <person name="Nusskern D.R."/>
            <person name="Shue B.C."/>
            <person name="Zheng X.H."/>
            <person name="Zhong F."/>
            <person name="Delcher A.L."/>
            <person name="Huson D.H."/>
            <person name="Kravitz S.A."/>
            <person name="Mouchard L."/>
            <person name="Reinert K."/>
            <person name="Remington K.A."/>
            <person name="Clark A.G."/>
            <person name="Waterman M.S."/>
            <person name="Eichler E.E."/>
            <person name="Adams M.D."/>
            <person name="Hunkapiller M.W."/>
            <person name="Myers E.W."/>
            <person name="Venter J.C."/>
        </authorList>
    </citation>
    <scope>NUCLEOTIDE SEQUENCE [LARGE SCALE GENOMIC DNA]</scope>
</reference>
<reference key="9">
    <citation type="journal article" date="2004" name="Genome Res.">
        <title>The status, quality, and expansion of the NIH full-length cDNA project: the Mammalian Gene Collection (MGC).</title>
        <authorList>
            <consortium name="The MGC Project Team"/>
        </authorList>
    </citation>
    <scope>NUCLEOTIDE SEQUENCE [LARGE SCALE MRNA] (ISOFORMS 1 AND 2)</scope>
    <source>
        <tissue>Brain</tissue>
        <tissue>Lung</tissue>
        <tissue>Placenta</tissue>
    </source>
</reference>
<reference key="10">
    <citation type="journal article" date="1992" name="Electrophoresis">
        <title>Human liver protein map: a reference database established by microsequencing and gel comparison.</title>
        <authorList>
            <person name="Hochstrasser D.F."/>
            <person name="Frutiger S."/>
            <person name="Paquet N."/>
            <person name="Bairoch A."/>
            <person name="Ravier F."/>
            <person name="Pasquali C."/>
            <person name="Sanchez J.-C."/>
            <person name="Tissot J.-D."/>
            <person name="Bjellqvist B."/>
            <person name="Vargas R."/>
            <person name="Appel R.D."/>
            <person name="Hughes G.J."/>
        </authorList>
    </citation>
    <scope>PROTEIN SEQUENCE OF 1-10</scope>
    <source>
        <tissue>Liver</tissue>
    </source>
</reference>
<reference key="11">
    <citation type="journal article" date="1992" name="Electrophoresis">
        <title>Microsequences of 145 proteins recorded in the two-dimensional gel protein database of normal human epidermal keratinocytes.</title>
        <authorList>
            <person name="Rasmussen H.H."/>
            <person name="van Damme J."/>
            <person name="Puype M."/>
            <person name="Gesser B."/>
            <person name="Celis J.E."/>
            <person name="Vandekerckhove J."/>
        </authorList>
    </citation>
    <scope>PROTEIN SEQUENCE OF 1-4; 22-31; 39-45 AND 103-109</scope>
    <source>
        <tissue>Keratinocyte</tissue>
    </source>
</reference>
<reference key="12">
    <citation type="journal article" date="1997" name="Electrophoresis">
        <title>Two-dimensional electrophoretic analysis of human breast carcinoma proteins: mapping of proteins that bind to the SH3 domain of mixed lineage kinase MLK2.</title>
        <authorList>
            <person name="Rasmussen R.K."/>
            <person name="Ji H."/>
            <person name="Eddes J.S."/>
            <person name="Moritz R.L."/>
            <person name="Reid G.E."/>
            <person name="Simpson R.J."/>
            <person name="Dorow D.S."/>
        </authorList>
    </citation>
    <scope>PROTEIN SEQUENCE OF 1-19</scope>
    <source>
        <tissue>Mammary carcinoma</tissue>
    </source>
</reference>
<reference key="13">
    <citation type="journal article" date="1995" name="Science">
        <title>Molecular identification of an IgE-dependent histamine-releasing factor.</title>
        <authorList>
            <person name="MacDonald S.M."/>
            <person name="Rafnar T."/>
            <person name="Langdon J."/>
            <person name="Lichtenstein L.M."/>
        </authorList>
    </citation>
    <scope>PROTEIN SEQUENCE OF 1-18</scope>
</reference>
<reference key="14">
    <citation type="submission" date="2008-12" db="UniProtKB">
        <authorList>
            <person name="Lubec G."/>
            <person name="Chen W.-Q."/>
            <person name="Sun Y."/>
        </authorList>
    </citation>
    <scope>PROTEIN SEQUENCE OF 6-34; 111-123 AND 131-164</scope>
    <scope>IDENTIFICATION BY MASS SPECTROMETRY</scope>
    <source>
        <tissue>Fetal brain cortex</tissue>
    </source>
</reference>
<reference key="15">
    <citation type="journal article" date="1997" name="Electrophoresis">
        <title>Translationally controlled tumor protein: a protein identified in several nontumoral cells including erythrocytes.</title>
        <authorList>
            <person name="Sanchez J.-C."/>
            <person name="Schaller D."/>
            <person name="Ravier F."/>
            <person name="Golaz O."/>
            <person name="Jaccoud S."/>
            <person name="Belet M."/>
            <person name="Wilkins M.R."/>
            <person name="James R."/>
            <person name="Deshusses J."/>
            <person name="Hochstrasser D.F."/>
        </authorList>
    </citation>
    <scope>TISSUE SPECIFICITY</scope>
    <scope>SUBCELLULAR LOCATION</scope>
</reference>
<reference key="16">
    <citation type="journal article" date="2002" name="Mol. Cell. Biol.">
        <title>Plk phosphorylation regulates the microtubule-stabilizing protein TCTP.</title>
        <authorList>
            <person name="Yarm F.R."/>
        </authorList>
    </citation>
    <scope>FUNCTION</scope>
    <scope>PHOSPHORYLATION AT SER-46 AND SER-64</scope>
</reference>
<reference key="17">
    <citation type="journal article" date="2004" name="J. Biol. Chem.">
        <title>TSAP6 facilitates the secretion of translationally controlled tumor protein/histamine-releasing factor via a nonclassical pathway.</title>
        <authorList>
            <person name="Amzallag N."/>
            <person name="Passer B.J."/>
            <person name="Allanic D."/>
            <person name="Segura E."/>
            <person name="Thery C."/>
            <person name="Goud B."/>
            <person name="Amson R."/>
            <person name="Telerman A."/>
        </authorList>
    </citation>
    <scope>INTERACTION WITH STEAP3</scope>
</reference>
<reference key="18">
    <citation type="journal article" date="2004" name="Prostate">
        <title>Translationally controlled tumor protein (TCTP) in the human prostate and prostate cancer cells: expression, distribution, and calcium binding activity.</title>
        <authorList>
            <person name="Arcuri F."/>
            <person name="Papa S."/>
            <person name="Carducci A."/>
            <person name="Romagnoli R."/>
            <person name="Liberatori S."/>
            <person name="Riparbelli M.G."/>
            <person name="Sanchez J.-C."/>
            <person name="Tosi P."/>
            <person name="del Vecchio M.T."/>
        </authorList>
    </citation>
    <scope>CALCIUM-BINDING</scope>
</reference>
<reference key="19">
    <citation type="journal article" date="2005" name="Biol. Reprod.">
        <title>The translationally controlled tumor protein is a novel calcium binding protein of the human placenta and regulates calcium handling in trophoblast cells.</title>
        <authorList>
            <person name="Arcuri F."/>
            <person name="Papa S."/>
            <person name="Meini A."/>
            <person name="Carducci A."/>
            <person name="Romagnoli R."/>
            <person name="Bianchi L."/>
            <person name="Riparbelli M.G."/>
            <person name="Sanchez J.-C."/>
            <person name="Palmi M."/>
            <person name="Tosi P."/>
            <person name="Cintorino M."/>
        </authorList>
    </citation>
    <scope>CALCIUM-BINDING</scope>
    <source>
        <tissue>Placenta</tissue>
    </source>
</reference>
<reference key="20">
    <citation type="journal article" date="2006" name="Cell. Microbiol.">
        <title>Transcriptomic and proteomic analyses of rhabdomyosarcoma cells reveal differential cellular gene expression in response to enterovirus 71 infection.</title>
        <authorList>
            <person name="Leong W.F."/>
            <person name="Chow V.T."/>
        </authorList>
    </citation>
    <scope>INDUCTION</scope>
    <scope>IDENTIFICATION BY MASS SPECTROMETRY</scope>
</reference>
<reference key="21">
    <citation type="journal article" date="2008" name="FEBS Lett.">
        <title>Interaction between fortilin and transforming growth factor-beta stimulated clone-22 (TSC-22) prevents apoptosis via the destabilization of TSC-22.</title>
        <authorList>
            <person name="Lee J.H."/>
            <person name="Rho S.B."/>
            <person name="Park S.Y."/>
            <person name="Chun T."/>
        </authorList>
    </citation>
    <scope>FUNCTION</scope>
    <scope>INTERACTION WITH TSC22D1</scope>
</reference>
<reference key="22">
    <citation type="journal article" date="2008" name="Proc. Natl. Acad. Sci. U.S.A.">
        <title>A quantitative atlas of mitotic phosphorylation.</title>
        <authorList>
            <person name="Dephoure N."/>
            <person name="Zhou C."/>
            <person name="Villen J."/>
            <person name="Beausoleil S.A."/>
            <person name="Bakalarski C.E."/>
            <person name="Elledge S.J."/>
            <person name="Gygi S.P."/>
        </authorList>
    </citation>
    <scope>PHOSPHORYLATION [LARGE SCALE ANALYSIS] AT SER-46 AND SER-53</scope>
    <scope>IDENTIFICATION BY MASS SPECTROMETRY [LARGE SCALE ANALYSIS]</scope>
    <source>
        <tissue>Cervix carcinoma</tissue>
    </source>
</reference>
<reference key="23">
    <citation type="journal article" date="2010" name="Sci. Signal.">
        <title>Quantitative phosphoproteomics reveals widespread full phosphorylation site occupancy during mitosis.</title>
        <authorList>
            <person name="Olsen J.V."/>
            <person name="Vermeulen M."/>
            <person name="Santamaria A."/>
            <person name="Kumar C."/>
            <person name="Miller M.L."/>
            <person name="Jensen L.J."/>
            <person name="Gnad F."/>
            <person name="Cox J."/>
            <person name="Jensen T.S."/>
            <person name="Nigg E.A."/>
            <person name="Brunak S."/>
            <person name="Mann M."/>
        </authorList>
    </citation>
    <scope>IDENTIFICATION BY MASS SPECTROMETRY [LARGE SCALE ANALYSIS]</scope>
    <source>
        <tissue>Cervix carcinoma</tissue>
    </source>
</reference>
<reference key="24">
    <citation type="journal article" date="2011" name="BMC Syst. Biol.">
        <title>Initial characterization of the human central proteome.</title>
        <authorList>
            <person name="Burkard T.R."/>
            <person name="Planyavsky M."/>
            <person name="Kaupe I."/>
            <person name="Breitwieser F.P."/>
            <person name="Buerckstuemmer T."/>
            <person name="Bennett K.L."/>
            <person name="Superti-Furga G."/>
            <person name="Colinge J."/>
        </authorList>
    </citation>
    <scope>IDENTIFICATION BY MASS SPECTROMETRY [LARGE SCALE ANALYSIS]</scope>
</reference>
<reference key="25">
    <citation type="journal article" date="2014" name="J. Proteomics">
        <title>An enzyme assisted RP-RPLC approach for in-depth analysis of human liver phosphoproteome.</title>
        <authorList>
            <person name="Bian Y."/>
            <person name="Song C."/>
            <person name="Cheng K."/>
            <person name="Dong M."/>
            <person name="Wang F."/>
            <person name="Huang J."/>
            <person name="Sun D."/>
            <person name="Wang L."/>
            <person name="Ye M."/>
            <person name="Zou H."/>
        </authorList>
    </citation>
    <scope>IDENTIFICATION BY MASS SPECTROMETRY [LARGE SCALE ANALYSIS]</scope>
    <source>
        <tissue>Liver</tissue>
    </source>
</reference>
<reference key="26">
    <citation type="journal article" date="2015" name="Proteomics">
        <title>N-terminome analysis of the human mitochondrial proteome.</title>
        <authorList>
            <person name="Vaca Jacome A.S."/>
            <person name="Rabilloud T."/>
            <person name="Schaeffer-Reiss C."/>
            <person name="Rompais M."/>
            <person name="Ayoub D."/>
            <person name="Lane L."/>
            <person name="Bairoch A."/>
            <person name="Van Dorsselaer A."/>
            <person name="Carapito C."/>
        </authorList>
    </citation>
    <scope>IDENTIFICATION BY MASS SPECTROMETRY [LARGE SCALE ANALYSIS]</scope>
</reference>
<reference key="27">
    <citation type="submission" date="2004-11" db="PDB data bank">
        <title>Solution structure of human translationally controlled tumor protein.</title>
        <authorList>
            <person name="Liu D.S."/>
            <person name="Feng Y.G."/>
            <person name="Wang J.F."/>
        </authorList>
    </citation>
    <scope>STRUCTURE BY NMR</scope>
</reference>
<accession>P13693</accession>
<accession>B2R7E5</accession>
<accession>Q6YLS2</accession>
<accession>Q7Z4J4</accession>
<accession>Q8TBK7</accession>
<accession>Q96EE2</accession>
<accession>Q9UC70</accession>
<gene>
    <name type="primary">TPT1</name>
</gene>
<sequence length="172" mass="19595">MIIYRDLISHDEMFSDIYKIREIADGLCLEVEGKMVSRTEGNIDDSLIGGNASAEGPEGEGTESTVITGVDIVMNHHLQETSFTKEAYKKYIKDYMKSIKGKLEEQRPERVKPFMTGAAEQIKHILANFKNYQFFIGENMNPDGMVALLDYREDGVTPYMIFFKDGLEMEKC</sequence>
<name>TCTP_HUMAN</name>
<dbReference type="EMBL" id="X16064">
    <property type="protein sequence ID" value="CAA34200.1"/>
    <property type="molecule type" value="mRNA"/>
</dbReference>
<dbReference type="EMBL" id="AJ400717">
    <property type="protein sequence ID" value="CAB87812.1"/>
    <property type="molecule type" value="Genomic_DNA"/>
</dbReference>
<dbReference type="EMBL" id="AY334563">
    <property type="protein sequence ID" value="AAQ01550.1"/>
    <property type="molecule type" value="mRNA"/>
</dbReference>
<dbReference type="EMBL" id="AY117678">
    <property type="protein sequence ID" value="AAM51565.1"/>
    <property type="molecule type" value="mRNA"/>
</dbReference>
<dbReference type="EMBL" id="CR457036">
    <property type="protein sequence ID" value="CAG33317.1"/>
    <property type="molecule type" value="mRNA"/>
</dbReference>
<dbReference type="EMBL" id="AK312951">
    <property type="protein sequence ID" value="BAG35792.1"/>
    <property type="molecule type" value="mRNA"/>
</dbReference>
<dbReference type="EMBL" id="AL138963">
    <property type="status" value="NOT_ANNOTATED_CDS"/>
    <property type="molecule type" value="Genomic_DNA"/>
</dbReference>
<dbReference type="EMBL" id="CH471075">
    <property type="protein sequence ID" value="EAX08731.1"/>
    <property type="molecule type" value="Genomic_DNA"/>
</dbReference>
<dbReference type="EMBL" id="CH471075">
    <property type="protein sequence ID" value="EAX08732.1"/>
    <property type="molecule type" value="Genomic_DNA"/>
</dbReference>
<dbReference type="EMBL" id="BC003352">
    <property type="protein sequence ID" value="AAH03352.1"/>
    <property type="molecule type" value="mRNA"/>
</dbReference>
<dbReference type="EMBL" id="BC012431">
    <property type="protein sequence ID" value="AAH12431.1"/>
    <property type="molecule type" value="mRNA"/>
</dbReference>
<dbReference type="EMBL" id="BC022436">
    <property type="protein sequence ID" value="AAH22436.1"/>
    <property type="molecule type" value="mRNA"/>
</dbReference>
<dbReference type="EMBL" id="BC052333">
    <property type="protein sequence ID" value="AAH52333.1"/>
    <property type="molecule type" value="mRNA"/>
</dbReference>
<dbReference type="CCDS" id="CCDS66538.1">
    <molecule id="P13693-2"/>
</dbReference>
<dbReference type="CCDS" id="CCDS9397.1">
    <molecule id="P13693-1"/>
</dbReference>
<dbReference type="PIR" id="S06590">
    <property type="entry name" value="S06590"/>
</dbReference>
<dbReference type="RefSeq" id="NP_001273202.1">
    <molecule id="P13693-2"/>
    <property type="nucleotide sequence ID" value="NM_001286273.2"/>
</dbReference>
<dbReference type="RefSeq" id="NP_003286.1">
    <molecule id="P13693-1"/>
    <property type="nucleotide sequence ID" value="NM_003295.4"/>
</dbReference>
<dbReference type="PDB" id="1YZ1">
    <property type="method" value="X-ray"/>
    <property type="resolution" value="2.00 A"/>
    <property type="chains" value="A/B/C/D=1-172"/>
</dbReference>
<dbReference type="PDB" id="2HR9">
    <property type="method" value="NMR"/>
    <property type="chains" value="A=1-172"/>
</dbReference>
<dbReference type="PDB" id="3EBM">
    <property type="method" value="X-ray"/>
    <property type="resolution" value="2.60 A"/>
    <property type="chains" value="A/B/C/D=1-172"/>
</dbReference>
<dbReference type="PDB" id="4Z9V">
    <property type="method" value="X-ray"/>
    <property type="resolution" value="2.10 A"/>
    <property type="chains" value="C/D/E/F/G/H=11-31"/>
</dbReference>
<dbReference type="PDB" id="5O9L">
    <property type="method" value="X-ray"/>
    <property type="resolution" value="1.75 A"/>
    <property type="chains" value="A/B=1-172"/>
</dbReference>
<dbReference type="PDB" id="5O9M">
    <property type="method" value="X-ray"/>
    <property type="resolution" value="1.40 A"/>
    <property type="chains" value="A/B=1-172"/>
</dbReference>
<dbReference type="PDB" id="6IZB">
    <property type="method" value="X-ray"/>
    <property type="resolution" value="1.90 A"/>
    <property type="chains" value="A=1-172"/>
</dbReference>
<dbReference type="PDB" id="6IZE">
    <property type="method" value="X-ray"/>
    <property type="resolution" value="2.29 A"/>
    <property type="chains" value="A/B/C/D=1-172"/>
</dbReference>
<dbReference type="PDBsum" id="1YZ1"/>
<dbReference type="PDBsum" id="2HR9"/>
<dbReference type="PDBsum" id="3EBM"/>
<dbReference type="PDBsum" id="4Z9V"/>
<dbReference type="PDBsum" id="5O9L"/>
<dbReference type="PDBsum" id="5O9M"/>
<dbReference type="PDBsum" id="6IZB"/>
<dbReference type="PDBsum" id="6IZE"/>
<dbReference type="BMRB" id="P13693"/>
<dbReference type="SMR" id="P13693"/>
<dbReference type="BioGRID" id="113030">
    <property type="interactions" value="289"/>
</dbReference>
<dbReference type="DIP" id="DIP-40097N"/>
<dbReference type="FunCoup" id="P13693">
    <property type="interactions" value="1751"/>
</dbReference>
<dbReference type="IntAct" id="P13693">
    <property type="interactions" value="177"/>
</dbReference>
<dbReference type="MINT" id="P13693"/>
<dbReference type="STRING" id="9606.ENSP00000477781"/>
<dbReference type="DrugBank" id="DB11093">
    <property type="generic name" value="Calcium citrate"/>
</dbReference>
<dbReference type="DrugBank" id="DB11348">
    <property type="generic name" value="Calcium Phosphate"/>
</dbReference>
<dbReference type="DrugBank" id="DB14481">
    <property type="generic name" value="Calcium phosphate dihydrate"/>
</dbReference>
<dbReference type="Allergome" id="3816">
    <property type="allergen name" value="Hom s TCTP"/>
</dbReference>
<dbReference type="GlyGen" id="P13693">
    <property type="glycosylation" value="1 site, 1 O-linked glycan (1 site)"/>
</dbReference>
<dbReference type="iPTMnet" id="P13693"/>
<dbReference type="MetOSite" id="P13693"/>
<dbReference type="PhosphoSitePlus" id="P13693"/>
<dbReference type="SwissPalm" id="P13693"/>
<dbReference type="BioMuta" id="TPT1"/>
<dbReference type="DMDM" id="136479"/>
<dbReference type="OGP" id="P13693"/>
<dbReference type="REPRODUCTION-2DPAGE" id="IPI00550900"/>
<dbReference type="jPOST" id="P13693"/>
<dbReference type="MassIVE" id="P13693"/>
<dbReference type="PaxDb" id="9606-ENSP00000477781"/>
<dbReference type="PeptideAtlas" id="P13693"/>
<dbReference type="PRIDE" id="P13693"/>
<dbReference type="ProteomicsDB" id="52972">
    <molecule id="P13693-1"/>
</dbReference>
<dbReference type="ProteomicsDB" id="74026"/>
<dbReference type="Pumba" id="P13693"/>
<dbReference type="TopDownProteomics" id="P13693-1">
    <molecule id="P13693-1"/>
</dbReference>
<dbReference type="Antibodypedia" id="23600">
    <property type="antibodies" value="562 antibodies from 40 providers"/>
</dbReference>
<dbReference type="DNASU" id="7178"/>
<dbReference type="Ensembl" id="ENST00000379055.5">
    <molecule id="P13693-2"/>
    <property type="protein sequence ID" value="ENSP00000368344.1"/>
    <property type="gene ID" value="ENSG00000133112.17"/>
</dbReference>
<dbReference type="Ensembl" id="ENST00000379056.5">
    <molecule id="P13693-2"/>
    <property type="protein sequence ID" value="ENSP00000368345.1"/>
    <property type="gene ID" value="ENSG00000133112.17"/>
</dbReference>
<dbReference type="Ensembl" id="ENST00000530705.6">
    <molecule id="P13693-1"/>
    <property type="protein sequence ID" value="ENSP00000431872.2"/>
    <property type="gene ID" value="ENSG00000133112.17"/>
</dbReference>
<dbReference type="GeneID" id="7178"/>
<dbReference type="KEGG" id="hsa:7178"/>
<dbReference type="MANE-Select" id="ENST00000530705.6">
    <property type="protein sequence ID" value="ENSP00000431872.2"/>
    <property type="RefSeq nucleotide sequence ID" value="NM_003295.4"/>
    <property type="RefSeq protein sequence ID" value="NP_003286.1"/>
</dbReference>
<dbReference type="UCSC" id="uc001uzy.3">
    <molecule id="P13693-1"/>
    <property type="organism name" value="human"/>
</dbReference>
<dbReference type="AGR" id="HGNC:12022"/>
<dbReference type="CTD" id="7178"/>
<dbReference type="DisGeNET" id="7178"/>
<dbReference type="GeneCards" id="TPT1"/>
<dbReference type="HGNC" id="HGNC:12022">
    <property type="gene designation" value="TPT1"/>
</dbReference>
<dbReference type="HPA" id="ENSG00000133112">
    <property type="expression patterns" value="Tissue enhanced (skeletal)"/>
</dbReference>
<dbReference type="MIM" id="600763">
    <property type="type" value="gene"/>
</dbReference>
<dbReference type="neXtProt" id="NX_P13693"/>
<dbReference type="OpenTargets" id="ENSG00000133112"/>
<dbReference type="PharmGKB" id="PA36701"/>
<dbReference type="VEuPathDB" id="HostDB:ENSG00000133112"/>
<dbReference type="eggNOG" id="KOG1727">
    <property type="taxonomic scope" value="Eukaryota"/>
</dbReference>
<dbReference type="GeneTree" id="ENSGT00390000006051"/>
<dbReference type="HOGENOM" id="CLU_095877_0_1_1"/>
<dbReference type="InParanoid" id="P13693"/>
<dbReference type="OMA" id="CAMITEG"/>
<dbReference type="OrthoDB" id="9509102at2759"/>
<dbReference type="PAN-GO" id="P13693">
    <property type="GO annotations" value="2 GO annotations based on evolutionary models"/>
</dbReference>
<dbReference type="PhylomeDB" id="P13693"/>
<dbReference type="TreeFam" id="TF300238"/>
<dbReference type="PathwayCommons" id="P13693"/>
<dbReference type="SignaLink" id="P13693"/>
<dbReference type="SIGNOR" id="P13693"/>
<dbReference type="BioGRID-ORCS" id="7178">
    <property type="hits" value="676 hits in 1143 CRISPR screens"/>
</dbReference>
<dbReference type="CD-CODE" id="DEE660B4">
    <property type="entry name" value="Stress granule"/>
</dbReference>
<dbReference type="ChiTaRS" id="TPT1">
    <property type="organism name" value="human"/>
</dbReference>
<dbReference type="EvolutionaryTrace" id="P13693"/>
<dbReference type="GeneWiki" id="TPT1"/>
<dbReference type="GeneWiki" id="Translationally-controlled_tumor_protein"/>
<dbReference type="GenomeRNAi" id="7178"/>
<dbReference type="Pharos" id="P13693">
    <property type="development level" value="Tbio"/>
</dbReference>
<dbReference type="PRO" id="PR:P13693"/>
<dbReference type="Proteomes" id="UP000005640">
    <property type="component" value="Chromosome 13"/>
</dbReference>
<dbReference type="RNAct" id="P13693">
    <property type="molecule type" value="protein"/>
</dbReference>
<dbReference type="Bgee" id="ENSG00000133112">
    <property type="expression patterns" value="Expressed in ileal mucosa and 215 other cell types or tissues"/>
</dbReference>
<dbReference type="ExpressionAtlas" id="P13693">
    <property type="expression patterns" value="baseline and differential"/>
</dbReference>
<dbReference type="GO" id="GO:0005737">
    <property type="term" value="C:cytoplasm"/>
    <property type="evidence" value="ECO:0000314"/>
    <property type="project" value="UniProtKB"/>
</dbReference>
<dbReference type="GO" id="GO:0005881">
    <property type="term" value="C:cytoplasmic microtubule"/>
    <property type="evidence" value="ECO:0000314"/>
    <property type="project" value="UniProtKB"/>
</dbReference>
<dbReference type="GO" id="GO:0005829">
    <property type="term" value="C:cytosol"/>
    <property type="evidence" value="ECO:0000314"/>
    <property type="project" value="HPA"/>
</dbReference>
<dbReference type="GO" id="GO:0070062">
    <property type="term" value="C:extracellular exosome"/>
    <property type="evidence" value="ECO:0007005"/>
    <property type="project" value="UniProtKB"/>
</dbReference>
<dbReference type="GO" id="GO:0005615">
    <property type="term" value="C:extracellular space"/>
    <property type="evidence" value="ECO:0000314"/>
    <property type="project" value="MGI"/>
</dbReference>
<dbReference type="GO" id="GO:0005771">
    <property type="term" value="C:multivesicular body"/>
    <property type="evidence" value="ECO:0000314"/>
    <property type="project" value="MGI"/>
</dbReference>
<dbReference type="GO" id="GO:0005654">
    <property type="term" value="C:nucleoplasm"/>
    <property type="evidence" value="ECO:0007669"/>
    <property type="project" value="Ensembl"/>
</dbReference>
<dbReference type="GO" id="GO:0005634">
    <property type="term" value="C:nucleus"/>
    <property type="evidence" value="ECO:0000314"/>
    <property type="project" value="MGI"/>
</dbReference>
<dbReference type="GO" id="GO:0000922">
    <property type="term" value="C:spindle pole"/>
    <property type="evidence" value="ECO:0000314"/>
    <property type="project" value="UniProtKB"/>
</dbReference>
<dbReference type="GO" id="GO:0005509">
    <property type="term" value="F:calcium ion binding"/>
    <property type="evidence" value="ECO:0000314"/>
    <property type="project" value="UniProtKB"/>
</dbReference>
<dbReference type="GO" id="GO:0140297">
    <property type="term" value="F:DNA-binding transcription factor binding"/>
    <property type="evidence" value="ECO:0007669"/>
    <property type="project" value="Ensembl"/>
</dbReference>
<dbReference type="GO" id="GO:0003723">
    <property type="term" value="F:RNA binding"/>
    <property type="evidence" value="ECO:0007005"/>
    <property type="project" value="UniProtKB"/>
</dbReference>
<dbReference type="GO" id="GO:0006816">
    <property type="term" value="P:calcium ion transport"/>
    <property type="evidence" value="ECO:0000305"/>
    <property type="project" value="UniProtKB"/>
</dbReference>
<dbReference type="GO" id="GO:0006874">
    <property type="term" value="P:intracellular calcium ion homeostasis"/>
    <property type="evidence" value="ECO:0000305"/>
    <property type="project" value="UniProtKB"/>
</dbReference>
<dbReference type="GO" id="GO:0043066">
    <property type="term" value="P:negative regulation of apoptotic process"/>
    <property type="evidence" value="ECO:0000304"/>
    <property type="project" value="UniProtKB"/>
</dbReference>
<dbReference type="GO" id="GO:2000384">
    <property type="term" value="P:negative regulation of ectoderm development"/>
    <property type="evidence" value="ECO:0007669"/>
    <property type="project" value="Ensembl"/>
</dbReference>
<dbReference type="GO" id="GO:1902230">
    <property type="term" value="P:negative regulation of intrinsic apoptotic signaling pathway in response to DNA damage"/>
    <property type="evidence" value="ECO:0000315"/>
    <property type="project" value="MGI"/>
</dbReference>
<dbReference type="GO" id="GO:0042981">
    <property type="term" value="P:regulation of apoptotic process"/>
    <property type="evidence" value="ECO:0000303"/>
    <property type="project" value="UniProtKB"/>
</dbReference>
<dbReference type="GO" id="GO:0009615">
    <property type="term" value="P:response to virus"/>
    <property type="evidence" value="ECO:0000270"/>
    <property type="project" value="UniProtKB"/>
</dbReference>
<dbReference type="GO" id="GO:0019827">
    <property type="term" value="P:stem cell population maintenance"/>
    <property type="evidence" value="ECO:0007669"/>
    <property type="project" value="Ensembl"/>
</dbReference>
<dbReference type="DisProt" id="DP01972"/>
<dbReference type="FunFam" id="2.170.150.10:FF:000001">
    <property type="entry name" value="Tumor protein, translationally-controlled 1"/>
    <property type="match status" value="1"/>
</dbReference>
<dbReference type="Gene3D" id="2.170.150.10">
    <property type="entry name" value="Metal Binding Protein, Guanine Nucleotide Exchange Factor, Chain A"/>
    <property type="match status" value="1"/>
</dbReference>
<dbReference type="IDEAL" id="IID00651"/>
<dbReference type="InterPro" id="IPR011057">
    <property type="entry name" value="Mss4-like_sf"/>
</dbReference>
<dbReference type="InterPro" id="IPR011323">
    <property type="entry name" value="Mss4/transl-control_tumour"/>
</dbReference>
<dbReference type="InterPro" id="IPR034737">
    <property type="entry name" value="TCTP"/>
</dbReference>
<dbReference type="InterPro" id="IPR018103">
    <property type="entry name" value="Translation_control_tumour_CS"/>
</dbReference>
<dbReference type="InterPro" id="IPR018105">
    <property type="entry name" value="Translational_control_tumour_p"/>
</dbReference>
<dbReference type="PANTHER" id="PTHR11991">
    <property type="entry name" value="TRANSLATIONALLY CONTROLLED TUMOR PROTEIN-RELATED"/>
    <property type="match status" value="1"/>
</dbReference>
<dbReference type="PANTHER" id="PTHR11991:SF0">
    <property type="entry name" value="TRANSLATIONALLY-CONTROLLED TUMOR PROTEIN"/>
    <property type="match status" value="1"/>
</dbReference>
<dbReference type="Pfam" id="PF00838">
    <property type="entry name" value="TCTP"/>
    <property type="match status" value="1"/>
</dbReference>
<dbReference type="PRINTS" id="PR01653">
    <property type="entry name" value="TCTPROTEIN"/>
</dbReference>
<dbReference type="SUPFAM" id="SSF51316">
    <property type="entry name" value="Mss4-like"/>
    <property type="match status" value="1"/>
</dbReference>
<dbReference type="PROSITE" id="PS01002">
    <property type="entry name" value="TCTP_1"/>
    <property type="match status" value="1"/>
</dbReference>
<dbReference type="PROSITE" id="PS01003">
    <property type="entry name" value="TCTP_2"/>
    <property type="match status" value="1"/>
</dbReference>
<dbReference type="PROSITE" id="PS51797">
    <property type="entry name" value="TCTP_3"/>
    <property type="match status" value="1"/>
</dbReference>
<proteinExistence type="evidence at protein level"/>
<organism>
    <name type="scientific">Homo sapiens</name>
    <name type="common">Human</name>
    <dbReference type="NCBI Taxonomy" id="9606"/>
    <lineage>
        <taxon>Eukaryota</taxon>
        <taxon>Metazoa</taxon>
        <taxon>Chordata</taxon>
        <taxon>Craniata</taxon>
        <taxon>Vertebrata</taxon>
        <taxon>Euteleostomi</taxon>
        <taxon>Mammalia</taxon>
        <taxon>Eutheria</taxon>
        <taxon>Euarchontoglires</taxon>
        <taxon>Primates</taxon>
        <taxon>Haplorrhini</taxon>
        <taxon>Catarrhini</taxon>
        <taxon>Hominidae</taxon>
        <taxon>Homo</taxon>
    </lineage>
</organism>
<evidence type="ECO:0000250" key="1">
    <source>
        <dbReference type="UniProtKB" id="P63029"/>
    </source>
</evidence>
<evidence type="ECO:0000255" key="2">
    <source>
        <dbReference type="PROSITE-ProRule" id="PRU01133"/>
    </source>
</evidence>
<evidence type="ECO:0000269" key="3">
    <source>
    </source>
</evidence>
<evidence type="ECO:0000269" key="4">
    <source>
    </source>
</evidence>
<evidence type="ECO:0000269" key="5">
    <source>
    </source>
</evidence>
<evidence type="ECO:0000269" key="6">
    <source>
    </source>
</evidence>
<evidence type="ECO:0000269" key="7">
    <source>
    </source>
</evidence>
<evidence type="ECO:0000269" key="8">
    <source>
    </source>
</evidence>
<evidence type="ECO:0000269" key="9">
    <source>
    </source>
</evidence>
<evidence type="ECO:0000303" key="10">
    <source>
    </source>
</evidence>
<evidence type="ECO:0000305" key="11"/>
<evidence type="ECO:0007744" key="12">
    <source>
    </source>
</evidence>
<evidence type="ECO:0007829" key="13">
    <source>
        <dbReference type="PDB" id="2HR9"/>
    </source>
</evidence>
<evidence type="ECO:0007829" key="14">
    <source>
        <dbReference type="PDB" id="5O9M"/>
    </source>
</evidence>
<protein>
    <recommendedName>
        <fullName>Translationally-controlled tumor protein</fullName>
        <shortName>TCTP</shortName>
    </recommendedName>
    <alternativeName>
        <fullName>Fortilin</fullName>
    </alternativeName>
    <alternativeName>
        <fullName>Histamine-releasing factor</fullName>
        <shortName>HRF</shortName>
    </alternativeName>
    <alternativeName>
        <fullName>p23</fullName>
    </alternativeName>
</protein>
<keyword id="KW-0002">3D-structure</keyword>
<keyword id="KW-0025">Alternative splicing</keyword>
<keyword id="KW-0106">Calcium</keyword>
<keyword id="KW-0963">Cytoplasm</keyword>
<keyword id="KW-0903">Direct protein sequencing</keyword>
<keyword id="KW-0597">Phosphoprotein</keyword>
<keyword id="KW-1267">Proteomics identification</keyword>
<keyword id="KW-1185">Reference proteome</keyword>
<feature type="chain" id="PRO_0000211268" description="Translationally-controlled tumor protein">
    <location>
        <begin position="1"/>
        <end position="172"/>
    </location>
</feature>
<feature type="domain" description="TCTP" evidence="2">
    <location>
        <begin position="1"/>
        <end position="172"/>
    </location>
</feature>
<feature type="region of interest" description="Required for reduction of TSC22D1 protein stability" evidence="8">
    <location>
        <begin position="70"/>
        <end position="172"/>
    </location>
</feature>
<feature type="modified residue" description="Phosphoserine; by PLK1" evidence="3 12">
    <location>
        <position position="46"/>
    </location>
</feature>
<feature type="modified residue" description="Phosphoserine" evidence="12">
    <location>
        <position position="53"/>
    </location>
</feature>
<feature type="modified residue" description="Phosphoserine; by PLK1" evidence="3">
    <location>
        <position position="64"/>
    </location>
</feature>
<feature type="splice variant" id="VSP_054838" description="In isoform 2." evidence="10">
    <location>
        <begin position="1"/>
        <end position="34"/>
    </location>
</feature>
<feature type="sequence variant" id="VAR_052273" description="In dbSNP:rs3087989.">
    <original>V</original>
    <variation>F</variation>
    <location>
        <position position="146"/>
    </location>
</feature>
<feature type="sequence conflict" description="In Ref. 9; AAH12431." evidence="11" ref="9">
    <original>SA</original>
    <variation>YG</variation>
    <location>
        <begin position="53"/>
        <end position="54"/>
    </location>
</feature>
<feature type="sequence conflict" description="In Ref. 3; AAQ01550." evidence="11" ref="3">
    <original>E</original>
    <variation>K</variation>
    <location>
        <position position="168"/>
    </location>
</feature>
<feature type="strand" evidence="14">
    <location>
        <begin position="2"/>
        <end position="6"/>
    </location>
</feature>
<feature type="turn" evidence="14">
    <location>
        <begin position="7"/>
        <end position="9"/>
    </location>
</feature>
<feature type="strand" evidence="14">
    <location>
        <begin position="12"/>
        <end position="15"/>
    </location>
</feature>
<feature type="strand" evidence="14">
    <location>
        <begin position="18"/>
        <end position="23"/>
    </location>
</feature>
<feature type="turn" evidence="14">
    <location>
        <begin position="24"/>
        <end position="27"/>
    </location>
</feature>
<feature type="strand" evidence="14">
    <location>
        <begin position="28"/>
        <end position="32"/>
    </location>
</feature>
<feature type="strand" evidence="14">
    <location>
        <begin position="35"/>
        <end position="40"/>
    </location>
</feature>
<feature type="turn" evidence="13">
    <location>
        <begin position="46"/>
        <end position="48"/>
    </location>
</feature>
<feature type="helix" evidence="14">
    <location>
        <begin position="56"/>
        <end position="58"/>
    </location>
</feature>
<feature type="strand" evidence="14">
    <location>
        <begin position="65"/>
        <end position="70"/>
    </location>
</feature>
<feature type="helix" evidence="14">
    <location>
        <begin position="71"/>
        <end position="76"/>
    </location>
</feature>
<feature type="strand" evidence="14">
    <location>
        <begin position="79"/>
        <end position="81"/>
    </location>
</feature>
<feature type="helix" evidence="14">
    <location>
        <begin position="85"/>
        <end position="106"/>
    </location>
</feature>
<feature type="helix" evidence="14">
    <location>
        <begin position="108"/>
        <end position="110"/>
    </location>
</feature>
<feature type="helix" evidence="14">
    <location>
        <begin position="111"/>
        <end position="127"/>
    </location>
</feature>
<feature type="helix" evidence="14">
    <location>
        <begin position="128"/>
        <end position="131"/>
    </location>
</feature>
<feature type="strand" evidence="14">
    <location>
        <begin position="133"/>
        <end position="136"/>
    </location>
</feature>
<feature type="strand" evidence="14">
    <location>
        <begin position="146"/>
        <end position="151"/>
    </location>
</feature>
<feature type="strand" evidence="14">
    <location>
        <begin position="158"/>
        <end position="163"/>
    </location>
</feature>
<feature type="helix" evidence="14">
    <location>
        <begin position="164"/>
        <end position="166"/>
    </location>
</feature>
<feature type="strand" evidence="14">
    <location>
        <begin position="167"/>
        <end position="171"/>
    </location>
</feature>